<accession>Q88EI5</accession>
<feature type="chain" id="PRO_0000262367" description="N-succinylarginine dihydrolase">
    <location>
        <begin position="1"/>
        <end position="449"/>
    </location>
</feature>
<feature type="region of interest" description="Disordered" evidence="2">
    <location>
        <begin position="23"/>
        <end position="43"/>
    </location>
</feature>
<feature type="compositionally biased region" description="Low complexity" evidence="2">
    <location>
        <begin position="27"/>
        <end position="37"/>
    </location>
</feature>
<feature type="active site" evidence="1">
    <location>
        <position position="174"/>
    </location>
</feature>
<feature type="active site" evidence="1">
    <location>
        <position position="250"/>
    </location>
</feature>
<feature type="active site" description="Nucleophile" evidence="1">
    <location>
        <position position="371"/>
    </location>
</feature>
<feature type="binding site" evidence="1">
    <location>
        <begin position="19"/>
        <end position="28"/>
    </location>
    <ligand>
        <name>substrate</name>
    </ligand>
</feature>
<feature type="binding site" evidence="1">
    <location>
        <position position="110"/>
    </location>
    <ligand>
        <name>substrate</name>
    </ligand>
</feature>
<feature type="binding site" evidence="1">
    <location>
        <begin position="137"/>
        <end position="138"/>
    </location>
    <ligand>
        <name>substrate</name>
    </ligand>
</feature>
<feature type="binding site" evidence="1">
    <location>
        <position position="214"/>
    </location>
    <ligand>
        <name>substrate</name>
    </ligand>
</feature>
<feature type="binding site" evidence="1">
    <location>
        <position position="252"/>
    </location>
    <ligand>
        <name>substrate</name>
    </ligand>
</feature>
<feature type="binding site" evidence="1">
    <location>
        <position position="365"/>
    </location>
    <ligand>
        <name>substrate</name>
    </ligand>
</feature>
<proteinExistence type="inferred from homology"/>
<reference key="1">
    <citation type="journal article" date="2002" name="Environ. Microbiol.">
        <title>Complete genome sequence and comparative analysis of the metabolically versatile Pseudomonas putida KT2440.</title>
        <authorList>
            <person name="Nelson K.E."/>
            <person name="Weinel C."/>
            <person name="Paulsen I.T."/>
            <person name="Dodson R.J."/>
            <person name="Hilbert H."/>
            <person name="Martins dos Santos V.A.P."/>
            <person name="Fouts D.E."/>
            <person name="Gill S.R."/>
            <person name="Pop M."/>
            <person name="Holmes M."/>
            <person name="Brinkac L.M."/>
            <person name="Beanan M.J."/>
            <person name="DeBoy R.T."/>
            <person name="Daugherty S.C."/>
            <person name="Kolonay J.F."/>
            <person name="Madupu R."/>
            <person name="Nelson W.C."/>
            <person name="White O."/>
            <person name="Peterson J.D."/>
            <person name="Khouri H.M."/>
            <person name="Hance I."/>
            <person name="Chris Lee P."/>
            <person name="Holtzapple E.K."/>
            <person name="Scanlan D."/>
            <person name="Tran K."/>
            <person name="Moazzez A."/>
            <person name="Utterback T.R."/>
            <person name="Rizzo M."/>
            <person name="Lee K."/>
            <person name="Kosack D."/>
            <person name="Moestl D."/>
            <person name="Wedler H."/>
            <person name="Lauber J."/>
            <person name="Stjepandic D."/>
            <person name="Hoheisel J."/>
            <person name="Straetz M."/>
            <person name="Heim S."/>
            <person name="Kiewitz C."/>
            <person name="Eisen J.A."/>
            <person name="Timmis K.N."/>
            <person name="Duesterhoeft A."/>
            <person name="Tuemmler B."/>
            <person name="Fraser C.M."/>
        </authorList>
    </citation>
    <scope>NUCLEOTIDE SEQUENCE [LARGE SCALE GENOMIC DNA]</scope>
    <source>
        <strain>ATCC 47054 / DSM 6125 / CFBP 8728 / NCIMB 11950 / KT2440</strain>
    </source>
</reference>
<evidence type="ECO:0000255" key="1">
    <source>
        <dbReference type="HAMAP-Rule" id="MF_01172"/>
    </source>
</evidence>
<evidence type="ECO:0000256" key="2">
    <source>
        <dbReference type="SAM" id="MobiDB-lite"/>
    </source>
</evidence>
<gene>
    <name evidence="1" type="primary">astB</name>
    <name type="ordered locus">PP_4477</name>
</gene>
<comment type="function">
    <text evidence="1">Catalyzes the hydrolysis of N(2)-succinylarginine into N(2)-succinylornithine, ammonia and CO(2).</text>
</comment>
<comment type="catalytic activity">
    <reaction evidence="1">
        <text>N(2)-succinyl-L-arginine + 2 H2O + 2 H(+) = N(2)-succinyl-L-ornithine + 2 NH4(+) + CO2</text>
        <dbReference type="Rhea" id="RHEA:19533"/>
        <dbReference type="ChEBI" id="CHEBI:15377"/>
        <dbReference type="ChEBI" id="CHEBI:15378"/>
        <dbReference type="ChEBI" id="CHEBI:16526"/>
        <dbReference type="ChEBI" id="CHEBI:28938"/>
        <dbReference type="ChEBI" id="CHEBI:58241"/>
        <dbReference type="ChEBI" id="CHEBI:58514"/>
        <dbReference type="EC" id="3.5.3.23"/>
    </reaction>
</comment>
<comment type="pathway">
    <text evidence="1">Amino-acid degradation; L-arginine degradation via AST pathway; L-glutamate and succinate from L-arginine: step 2/5.</text>
</comment>
<comment type="subunit">
    <text evidence="1">Homodimer.</text>
</comment>
<comment type="similarity">
    <text evidence="1">Belongs to the succinylarginine dihydrolase family.</text>
</comment>
<name>ASTB_PSEPK</name>
<sequence>MKSYEVNFDGLVGPTHNYGGLSYGNVASQSNSQQASNPREAARQGLAKMKALADMGFKQGVLAPQERPDVAALRRLGFSGSDAEVIQRAAREAMPLLVASCSASSMWVANAATVSPSADTADGRVHFTAANLNCKYHRSIEHPTTSRVLGAMFNDEKYFAHHAALPAVAQFGDEGAANHTRFCRAYGEAGVEFFVYGRSAFDSRYPAPQKYPARQTLEASQAVARLHGLSDDGVVYAQQNPAVIDQGVFHNDVISVGNGEVLFYHEDAFLETDAVLGQLRAKLASKGGNFQAICVPRAAVAVEDAVRSYLFNSQLLSREDGSMLLVVPEECRNNERVWAYLGQLTSQGGPVKEVKVFDLKQSMQNGGGPACLRLRVALKEAELAAVNQGVIMTATLYDTLLQWVDRHYRDRLGEADLADPQLLVECRTALDELTQILKLGSVYPFQRQP</sequence>
<keyword id="KW-0056">Arginine metabolism</keyword>
<keyword id="KW-0378">Hydrolase</keyword>
<keyword id="KW-1185">Reference proteome</keyword>
<organism>
    <name type="scientific">Pseudomonas putida (strain ATCC 47054 / DSM 6125 / CFBP 8728 / NCIMB 11950 / KT2440)</name>
    <dbReference type="NCBI Taxonomy" id="160488"/>
    <lineage>
        <taxon>Bacteria</taxon>
        <taxon>Pseudomonadati</taxon>
        <taxon>Pseudomonadota</taxon>
        <taxon>Gammaproteobacteria</taxon>
        <taxon>Pseudomonadales</taxon>
        <taxon>Pseudomonadaceae</taxon>
        <taxon>Pseudomonas</taxon>
    </lineage>
</organism>
<protein>
    <recommendedName>
        <fullName evidence="1">N-succinylarginine dihydrolase</fullName>
        <ecNumber evidence="1">3.5.3.23</ecNumber>
    </recommendedName>
</protein>
<dbReference type="EC" id="3.5.3.23" evidence="1"/>
<dbReference type="EMBL" id="AE015451">
    <property type="protein sequence ID" value="AAN70052.1"/>
    <property type="molecule type" value="Genomic_DNA"/>
</dbReference>
<dbReference type="RefSeq" id="NP_746588.1">
    <property type="nucleotide sequence ID" value="NC_002947.4"/>
</dbReference>
<dbReference type="RefSeq" id="WP_010955174.1">
    <property type="nucleotide sequence ID" value="NZ_CP169744.1"/>
</dbReference>
<dbReference type="SMR" id="Q88EI5"/>
<dbReference type="STRING" id="160488.PP_4477"/>
<dbReference type="PaxDb" id="160488-PP_4477"/>
<dbReference type="GeneID" id="83678867"/>
<dbReference type="KEGG" id="ppu:PP_4477"/>
<dbReference type="PATRIC" id="fig|160488.4.peg.4763"/>
<dbReference type="eggNOG" id="COG3724">
    <property type="taxonomic scope" value="Bacteria"/>
</dbReference>
<dbReference type="HOGENOM" id="CLU_053835_0_0_6"/>
<dbReference type="OrthoDB" id="248552at2"/>
<dbReference type="PhylomeDB" id="Q88EI5"/>
<dbReference type="BioCyc" id="PPUT160488:G1G01-4778-MONOMER"/>
<dbReference type="UniPathway" id="UPA00185">
    <property type="reaction ID" value="UER00280"/>
</dbReference>
<dbReference type="Proteomes" id="UP000000556">
    <property type="component" value="Chromosome"/>
</dbReference>
<dbReference type="GO" id="GO:0009015">
    <property type="term" value="F:N-succinylarginine dihydrolase activity"/>
    <property type="evidence" value="ECO:0007669"/>
    <property type="project" value="UniProtKB-UniRule"/>
</dbReference>
<dbReference type="GO" id="GO:0019544">
    <property type="term" value="P:arginine catabolic process to glutamate"/>
    <property type="evidence" value="ECO:0007669"/>
    <property type="project" value="UniProtKB-UniRule"/>
</dbReference>
<dbReference type="GO" id="GO:0019545">
    <property type="term" value="P:arginine catabolic process to succinate"/>
    <property type="evidence" value="ECO:0007669"/>
    <property type="project" value="UniProtKB-UniRule"/>
</dbReference>
<dbReference type="FunFam" id="3.75.10.20:FF:000001">
    <property type="entry name" value="N-succinylarginine dihydrolase"/>
    <property type="match status" value="1"/>
</dbReference>
<dbReference type="Gene3D" id="3.75.10.20">
    <property type="entry name" value="Succinylarginine dihydrolase"/>
    <property type="match status" value="1"/>
</dbReference>
<dbReference type="HAMAP" id="MF_01172">
    <property type="entry name" value="AstB"/>
    <property type="match status" value="1"/>
</dbReference>
<dbReference type="InterPro" id="IPR037031">
    <property type="entry name" value="AstB_sf"/>
</dbReference>
<dbReference type="InterPro" id="IPR007079">
    <property type="entry name" value="SuccinylArg_d-Hdrlase_AstB"/>
</dbReference>
<dbReference type="NCBIfam" id="TIGR03241">
    <property type="entry name" value="arg_catab_astB"/>
    <property type="match status" value="1"/>
</dbReference>
<dbReference type="NCBIfam" id="NF009789">
    <property type="entry name" value="PRK13281.1"/>
    <property type="match status" value="1"/>
</dbReference>
<dbReference type="PANTHER" id="PTHR30420">
    <property type="entry name" value="N-SUCCINYLARGININE DIHYDROLASE"/>
    <property type="match status" value="1"/>
</dbReference>
<dbReference type="PANTHER" id="PTHR30420:SF2">
    <property type="entry name" value="N-SUCCINYLARGININE DIHYDROLASE"/>
    <property type="match status" value="1"/>
</dbReference>
<dbReference type="Pfam" id="PF04996">
    <property type="entry name" value="AstB"/>
    <property type="match status" value="1"/>
</dbReference>
<dbReference type="SUPFAM" id="SSF55909">
    <property type="entry name" value="Pentein"/>
    <property type="match status" value="1"/>
</dbReference>